<gene>
    <name evidence="2" type="primary">ATG3</name>
</gene>
<evidence type="ECO:0000250" key="1">
    <source>
        <dbReference type="UniProtKB" id="Q9CPX6"/>
    </source>
</evidence>
<evidence type="ECO:0000250" key="2">
    <source>
        <dbReference type="UniProtKB" id="Q9NT62"/>
    </source>
</evidence>
<evidence type="ECO:0000256" key="3">
    <source>
        <dbReference type="SAM" id="MobiDB-lite"/>
    </source>
</evidence>
<evidence type="ECO:0000305" key="4"/>
<organism>
    <name type="scientific">Bos taurus</name>
    <name type="common">Bovine</name>
    <dbReference type="NCBI Taxonomy" id="9913"/>
    <lineage>
        <taxon>Eukaryota</taxon>
        <taxon>Metazoa</taxon>
        <taxon>Chordata</taxon>
        <taxon>Craniata</taxon>
        <taxon>Vertebrata</taxon>
        <taxon>Euteleostomi</taxon>
        <taxon>Mammalia</taxon>
        <taxon>Eutheria</taxon>
        <taxon>Laurasiatheria</taxon>
        <taxon>Artiodactyla</taxon>
        <taxon>Ruminantia</taxon>
        <taxon>Pecora</taxon>
        <taxon>Bovidae</taxon>
        <taxon>Bovinae</taxon>
        <taxon>Bos</taxon>
    </lineage>
</organism>
<sequence>MQNVINTVKGKALEVAEYLTPVLKESKFKETGVITPEEFVAAGDHLVHHCPTWQWATGEELKVKAYLPSGKQFLVTKNVPCYKRCKQMEYSDELEAIIEEDDGDGGWVDTYHNTGIAGITEAVKEITLESKDSIKLQDCSALCEEEEEEDEGEAADMEEYEESGLLETDEATLDTRKIVEACKAKTDAGGEDAILQTRTYDLYITYDKYYQTPRLWLFGYDEQRQPLTVEHMYEDISQDHVKKTVTIENHPHLPPPPMCSVHPCRHAEVMKKIIETVAEGGGELGVHMYLLIFLKFVQAVIPTIEYDYTRHFTM</sequence>
<name>ATG3_BOVIN</name>
<reference key="1">
    <citation type="submission" date="2006-08" db="EMBL/GenBank/DDBJ databases">
        <authorList>
            <consortium name="NIH - Mammalian Gene Collection (MGC) project"/>
        </authorList>
    </citation>
    <scope>NUCLEOTIDE SEQUENCE [LARGE SCALE MRNA]</scope>
    <source>
        <strain>Hereford</strain>
        <tissue>Fetal pons</tissue>
    </source>
</reference>
<feature type="chain" id="PRO_0000286938" description="Ubiquitin-like-conjugating enzyme ATG3">
    <location>
        <begin position="1"/>
        <end position="314"/>
    </location>
</feature>
<feature type="region of interest" description="Interaction with ATG12" evidence="2">
    <location>
        <begin position="140"/>
        <end position="170"/>
    </location>
</feature>
<feature type="region of interest" description="Disordered" evidence="3">
    <location>
        <begin position="143"/>
        <end position="167"/>
    </location>
</feature>
<feature type="short sequence motif" description="Membrane-curvature-sensing motif" evidence="1">
    <location>
        <begin position="4"/>
        <end position="19"/>
    </location>
</feature>
<feature type="short sequence motif" description="Increases ATG3 translation efficiency by the ribomome assisted of EIF5A" evidence="1">
    <location>
        <begin position="101"/>
        <end position="103"/>
    </location>
</feature>
<feature type="short sequence motif" description="LIR motif" evidence="2">
    <location>
        <begin position="104"/>
        <end position="110"/>
    </location>
</feature>
<feature type="short sequence motif" description="Caspase cleavage motif LETD" evidence="2">
    <location>
        <begin position="166"/>
        <end position="169"/>
    </location>
</feature>
<feature type="active site" description="Glycyl thioester intermediate" evidence="2">
    <location>
        <position position="264"/>
    </location>
</feature>
<feature type="site" description="Cleavage; by CASP8" evidence="2">
    <location>
        <begin position="169"/>
        <end position="170"/>
    </location>
</feature>
<feature type="modified residue" description="N-acetylmethionine" evidence="2">
    <location>
        <position position="1"/>
    </location>
</feature>
<feature type="cross-link" description="Glycyl lysine isopeptide (Lys-Gly) (interchain with G-Cter in ATG12)" evidence="1">
    <location>
        <position position="243"/>
    </location>
</feature>
<dbReference type="EC" id="2.3.2.-" evidence="2"/>
<dbReference type="EMBL" id="BC120110">
    <property type="protein sequence ID" value="AAI20111.1"/>
    <property type="molecule type" value="mRNA"/>
</dbReference>
<dbReference type="RefSeq" id="NP_001068832.1">
    <property type="nucleotide sequence ID" value="NM_001075364.1"/>
</dbReference>
<dbReference type="SMR" id="Q0VCL3"/>
<dbReference type="FunCoup" id="Q0VCL3">
    <property type="interactions" value="4793"/>
</dbReference>
<dbReference type="STRING" id="9913.ENSBTAP00000011976"/>
<dbReference type="PaxDb" id="9913-ENSBTAP00000011976"/>
<dbReference type="PeptideAtlas" id="Q0VCL3"/>
<dbReference type="Ensembl" id="ENSBTAT00000011976.4">
    <property type="protein sequence ID" value="ENSBTAP00000011976.3"/>
    <property type="gene ID" value="ENSBTAG00000009084.5"/>
</dbReference>
<dbReference type="GeneID" id="508571"/>
<dbReference type="KEGG" id="bta:508571"/>
<dbReference type="CTD" id="64422"/>
<dbReference type="VEuPathDB" id="HostDB:ENSBTAG00000009084"/>
<dbReference type="VGNC" id="VGNC:26256">
    <property type="gene designation" value="ATG3"/>
</dbReference>
<dbReference type="eggNOG" id="KOG2981">
    <property type="taxonomic scope" value="Eukaryota"/>
</dbReference>
<dbReference type="GeneTree" id="ENSGT00390000010308"/>
<dbReference type="HOGENOM" id="CLU_027518_0_0_1"/>
<dbReference type="InParanoid" id="Q0VCL3"/>
<dbReference type="OMA" id="HCPTWSW"/>
<dbReference type="OrthoDB" id="1584384at2759"/>
<dbReference type="TreeFam" id="TF105903"/>
<dbReference type="Reactome" id="R-BTA-1632852">
    <property type="pathway name" value="Macroautophagy"/>
</dbReference>
<dbReference type="Proteomes" id="UP000009136">
    <property type="component" value="Chromosome 1"/>
</dbReference>
<dbReference type="Bgee" id="ENSBTAG00000009084">
    <property type="expression patterns" value="Expressed in monocyte and 104 other cell types or tissues"/>
</dbReference>
<dbReference type="GO" id="GO:0034274">
    <property type="term" value="C:Atg12-Atg5-Atg16 complex"/>
    <property type="evidence" value="ECO:0007669"/>
    <property type="project" value="Ensembl"/>
</dbReference>
<dbReference type="GO" id="GO:0005829">
    <property type="term" value="C:cytosol"/>
    <property type="evidence" value="ECO:0000318"/>
    <property type="project" value="GO_Central"/>
</dbReference>
<dbReference type="GO" id="GO:0000407">
    <property type="term" value="C:phagophore assembly site"/>
    <property type="evidence" value="ECO:0000318"/>
    <property type="project" value="GO_Central"/>
</dbReference>
<dbReference type="GO" id="GO:0019777">
    <property type="term" value="F:Atg12 transferase activity"/>
    <property type="evidence" value="ECO:0000250"/>
    <property type="project" value="UniProtKB"/>
</dbReference>
<dbReference type="GO" id="GO:0141046">
    <property type="term" value="F:Atg8-family conjugating enzyme activity"/>
    <property type="evidence" value="ECO:0000250"/>
    <property type="project" value="UniProtKB"/>
</dbReference>
<dbReference type="GO" id="GO:0019776">
    <property type="term" value="F:Atg8-family ligase activity"/>
    <property type="evidence" value="ECO:0000250"/>
    <property type="project" value="UniProtKB"/>
</dbReference>
<dbReference type="GO" id="GO:0019899">
    <property type="term" value="F:enzyme binding"/>
    <property type="evidence" value="ECO:0007669"/>
    <property type="project" value="Ensembl"/>
</dbReference>
<dbReference type="GO" id="GO:0000045">
    <property type="term" value="P:autophagosome assembly"/>
    <property type="evidence" value="ECO:0000250"/>
    <property type="project" value="UniProtKB"/>
</dbReference>
<dbReference type="GO" id="GO:0006914">
    <property type="term" value="P:autophagy"/>
    <property type="evidence" value="ECO:0000250"/>
    <property type="project" value="UniProtKB"/>
</dbReference>
<dbReference type="GO" id="GO:0000422">
    <property type="term" value="P:autophagy of mitochondrion"/>
    <property type="evidence" value="ECO:0000318"/>
    <property type="project" value="GO_Central"/>
</dbReference>
<dbReference type="GO" id="GO:0061723">
    <property type="term" value="P:glycophagy"/>
    <property type="evidence" value="ECO:0000318"/>
    <property type="project" value="GO_Central"/>
</dbReference>
<dbReference type="GO" id="GO:0043653">
    <property type="term" value="P:mitochondrial fragmentation involved in apoptotic process"/>
    <property type="evidence" value="ECO:0000250"/>
    <property type="project" value="UniProtKB"/>
</dbReference>
<dbReference type="GO" id="GO:0050765">
    <property type="term" value="P:negative regulation of phagocytosis"/>
    <property type="evidence" value="ECO:0007669"/>
    <property type="project" value="Ensembl"/>
</dbReference>
<dbReference type="GO" id="GO:0044804">
    <property type="term" value="P:nucleophagy"/>
    <property type="evidence" value="ECO:0000318"/>
    <property type="project" value="GO_Central"/>
</dbReference>
<dbReference type="GO" id="GO:0015031">
    <property type="term" value="P:protein transport"/>
    <property type="evidence" value="ECO:0007669"/>
    <property type="project" value="UniProtKB-KW"/>
</dbReference>
<dbReference type="GO" id="GO:0016567">
    <property type="term" value="P:protein ubiquitination"/>
    <property type="evidence" value="ECO:0007669"/>
    <property type="project" value="Ensembl"/>
</dbReference>
<dbReference type="GO" id="GO:1902017">
    <property type="term" value="P:regulation of cilium assembly"/>
    <property type="evidence" value="ECO:0000250"/>
    <property type="project" value="UniProtKB"/>
</dbReference>
<dbReference type="FunFam" id="3.30.1460.50:FF:000001">
    <property type="entry name" value="Autophagy-related protein 3"/>
    <property type="match status" value="1"/>
</dbReference>
<dbReference type="Gene3D" id="3.30.1460.50">
    <property type="match status" value="1"/>
</dbReference>
<dbReference type="InterPro" id="IPR007135">
    <property type="entry name" value="Atg3/Atg10"/>
</dbReference>
<dbReference type="PANTHER" id="PTHR12866">
    <property type="entry name" value="UBIQUITIN-LIKE-CONJUGATING ENZYME ATG3"/>
    <property type="match status" value="1"/>
</dbReference>
<dbReference type="PANTHER" id="PTHR12866:SF2">
    <property type="entry name" value="UBIQUITIN-LIKE-CONJUGATING ENZYME ATG3"/>
    <property type="match status" value="1"/>
</dbReference>
<dbReference type="Pfam" id="PF03987">
    <property type="entry name" value="Autophagy_act_C"/>
    <property type="match status" value="1"/>
</dbReference>
<keyword id="KW-0007">Acetylation</keyword>
<keyword id="KW-0072">Autophagy</keyword>
<keyword id="KW-0963">Cytoplasm</keyword>
<keyword id="KW-1017">Isopeptide bond</keyword>
<keyword id="KW-0653">Protein transport</keyword>
<keyword id="KW-1185">Reference proteome</keyword>
<keyword id="KW-0808">Transferase</keyword>
<keyword id="KW-0813">Transport</keyword>
<keyword id="KW-0832">Ubl conjugation</keyword>
<keyword id="KW-0833">Ubl conjugation pathway</keyword>
<comment type="function">
    <text evidence="1 2">Catalyzes the covalent conjugation of the C-terminal Gly of ATG8-like proteins (GABARAP, GABARAPL1, GABARAPL2 or MAP1LC3A) to the amino group of phosphatidylethanolamine (PE)-containing lipids in the membrane resulting in membrane-bound ATG8-like proteins which is one of the key steps in the development of autophagic isolation membranes during autophagosome formation. Cycles back and forth between binding to ATG7 for loading with the ATG8-like proteins and binding to E3 enzyme, composed of ATG12, ATG5 and ATG16L1 to promote ATG8-like proteins lipidation (By similarity). Also plays a role as a membrane curvature sensor that facilitates LC3/GABARAP lipidation by sensing local membrane stress associated with lipid-packing defects as occurs with high molar proportions of conical lipids or strident membrane curvature (By similarity). Interacts with negatively-charged membranes promoting membrane tethering and enhancing LC3/GABARAP lipidation (By similarity). Also acts as an autocatalytic E2-like enzyme by catalyzing the conjugation of ATG12 to itself in an ATG7-dependent manner, this complex thus formed, plays a role in mitochondrial homeostasis but not in autophagy. ATG12-ATG3 conjugation promotes late endosome to lysosome trafficking and basal autophagosome maturation via its interaction with PDCD6IP. ATG12-ATG3 conjugate is also formed upon viccina virus infection, leading to the disruption the cellular autophagy which is not necessary for vaccinia survival and proliferation. Promotes primary ciliogenesis by removing OFD1 from centriolar satellites via the autophagic pathway (By similarity).</text>
</comment>
<comment type="subunit">
    <text evidence="1 2">Homdimer. Interacts with ATG7; this interaction forms an E1-E2 complex that is essential for the transfer of GABARAP thioester from ATG7 to ATG3 and disrupts interaction with the E3 enzyme complex. Interacts with ATG12; this interaction is ATG7-dependent, essential for phosphatidylethanolamine (PE)-conjugated ATG8-like proteins formation and also mediates the autoconjugation of ATG12 on ATG3. Interacts with FNBP1L. Interacts with the E3 enzyme complex composed of 4 sets of ATG12-ATG5 and ATG16L1 (400 kDa); this interaction disrupts interaction with ATG7 and promotes ATG8-like proteins lipidation. Interacts with GABARAP and MAP1LC3A. Interacts with the ATG12-ATG5 conjugate; this interaction inhibits ATG8-like proteins lipidation (By similarity). Interacts (ATG12-ATG3 conjugate form) with PDCD6IP (via the BRO1 domain); this interaction is bridged by ATG12 and promotes multiple PDCD6IP-mediated functions such as endolysosomal trafficking, macroautophagy and exosome biogenesis (By similarity).</text>
</comment>
<comment type="subcellular location">
    <subcellularLocation>
        <location evidence="2">Cytoplasm</location>
    </subcellularLocation>
</comment>
<comment type="domain">
    <text evidence="1">The membrane-curvature-sensing motif targets curved membranes.</text>
</comment>
<comment type="domain">
    <text evidence="2">The N-terminal region works in concert with its geometry-selective amphipathic helix (AH) to promote LC3-PE conjugation activity only on the target membrane.</text>
</comment>
<comment type="domain">
    <text evidence="2">The LC3 interacting regions (LIR) motif mediates interaction with GABARAP and MAP1LC3A in a beta-sheet conformation-dependent manner. The LIR motif is required for LC3 lipidation and ATG3~LC3 thioester formation.</text>
</comment>
<comment type="PTM">
    <text evidence="1">Conjugated to ATG12 at Lys-243. ATG12-conjugation plays a role in regulation of mitochondrial homeostasis and cell death, while it is not involved in phosphatidylethanolamine-conjugation to ATG8-like proteins and autophagy.</text>
</comment>
<comment type="PTM">
    <text evidence="2">Cleaved by CASP8 upon death ligand binding such as tumor necrosis factor-alpha. CASP8 cleavage blocks survival-related autophagy and favors apoptosis.</text>
</comment>
<comment type="similarity">
    <text evidence="4">Belongs to the ATG3 family.</text>
</comment>
<proteinExistence type="evidence at transcript level"/>
<accession>Q0VCL3</accession>
<protein>
    <recommendedName>
        <fullName evidence="2">Ubiquitin-like-conjugating enzyme ATG3</fullName>
        <ecNumber evidence="2">2.3.2.-</ecNumber>
    </recommendedName>
    <alternativeName>
        <fullName>Autophagy-related protein 3</fullName>
        <shortName>APG3-like</shortName>
    </alternativeName>
</protein>